<proteinExistence type="inferred from homology"/>
<dbReference type="EC" id="6.1.1.9"/>
<dbReference type="EMBL" id="ACOL01000081">
    <property type="protein sequence ID" value="EEQ82274.1"/>
    <property type="molecule type" value="Genomic_DNA"/>
</dbReference>
<dbReference type="RefSeq" id="XP_002995945.1">
    <property type="nucleotide sequence ID" value="XM_002995899.1"/>
</dbReference>
<dbReference type="SMR" id="C4V924"/>
<dbReference type="FunCoup" id="C4V924">
    <property type="interactions" value="256"/>
</dbReference>
<dbReference type="STRING" id="578460.C4V924"/>
<dbReference type="KEGG" id="nce:NCER_101032"/>
<dbReference type="VEuPathDB" id="MicrosporidiaDB:NCER_101032"/>
<dbReference type="HOGENOM" id="CLU_001493_0_0_1"/>
<dbReference type="InParanoid" id="C4V924"/>
<dbReference type="OMA" id="RQWYIRN"/>
<dbReference type="OrthoDB" id="4060at6029"/>
<dbReference type="Proteomes" id="UP000009082">
    <property type="component" value="Unassembled WGS sequence"/>
</dbReference>
<dbReference type="GO" id="GO:0005829">
    <property type="term" value="C:cytosol"/>
    <property type="evidence" value="ECO:0007669"/>
    <property type="project" value="TreeGrafter"/>
</dbReference>
<dbReference type="GO" id="GO:0002161">
    <property type="term" value="F:aminoacyl-tRNA deacylase activity"/>
    <property type="evidence" value="ECO:0007669"/>
    <property type="project" value="InterPro"/>
</dbReference>
<dbReference type="GO" id="GO:0005524">
    <property type="term" value="F:ATP binding"/>
    <property type="evidence" value="ECO:0007669"/>
    <property type="project" value="UniProtKB-KW"/>
</dbReference>
<dbReference type="GO" id="GO:0004832">
    <property type="term" value="F:valine-tRNA ligase activity"/>
    <property type="evidence" value="ECO:0007669"/>
    <property type="project" value="UniProtKB-EC"/>
</dbReference>
<dbReference type="GO" id="GO:0006438">
    <property type="term" value="P:valyl-tRNA aminoacylation"/>
    <property type="evidence" value="ECO:0007669"/>
    <property type="project" value="InterPro"/>
</dbReference>
<dbReference type="CDD" id="cd07962">
    <property type="entry name" value="Anticodon_Ia_Val"/>
    <property type="match status" value="1"/>
</dbReference>
<dbReference type="CDD" id="cd00817">
    <property type="entry name" value="ValRS_core"/>
    <property type="match status" value="1"/>
</dbReference>
<dbReference type="FunFam" id="3.40.50.620:FF:000020">
    <property type="entry name" value="Valine--tRNA ligase, mitochondrial"/>
    <property type="match status" value="1"/>
</dbReference>
<dbReference type="FunFam" id="3.40.50.620:FF:000078">
    <property type="entry name" value="Valine--tRNA ligase, mitochondrial"/>
    <property type="match status" value="1"/>
</dbReference>
<dbReference type="Gene3D" id="3.40.50.620">
    <property type="entry name" value="HUPs"/>
    <property type="match status" value="2"/>
</dbReference>
<dbReference type="Gene3D" id="1.10.730.10">
    <property type="entry name" value="Isoleucyl-tRNA Synthetase, Domain 1"/>
    <property type="match status" value="1"/>
</dbReference>
<dbReference type="InterPro" id="IPR001412">
    <property type="entry name" value="aa-tRNA-synth_I_CS"/>
</dbReference>
<dbReference type="InterPro" id="IPR002300">
    <property type="entry name" value="aa-tRNA-synth_Ia"/>
</dbReference>
<dbReference type="InterPro" id="IPR033705">
    <property type="entry name" value="Anticodon_Ia_Val"/>
</dbReference>
<dbReference type="InterPro" id="IPR013155">
    <property type="entry name" value="M/V/L/I-tRNA-synth_anticd-bd"/>
</dbReference>
<dbReference type="InterPro" id="IPR014729">
    <property type="entry name" value="Rossmann-like_a/b/a_fold"/>
</dbReference>
<dbReference type="InterPro" id="IPR009080">
    <property type="entry name" value="tRNAsynth_Ia_anticodon-bd"/>
</dbReference>
<dbReference type="InterPro" id="IPR009008">
    <property type="entry name" value="Val/Leu/Ile-tRNA-synth_edit"/>
</dbReference>
<dbReference type="InterPro" id="IPR002303">
    <property type="entry name" value="Valyl-tRNA_ligase"/>
</dbReference>
<dbReference type="NCBIfam" id="NF004349">
    <property type="entry name" value="PRK05729.1"/>
    <property type="match status" value="1"/>
</dbReference>
<dbReference type="NCBIfam" id="TIGR00422">
    <property type="entry name" value="valS"/>
    <property type="match status" value="1"/>
</dbReference>
<dbReference type="PANTHER" id="PTHR11946:SF109">
    <property type="entry name" value="VALINE--TRNA LIGASE"/>
    <property type="match status" value="1"/>
</dbReference>
<dbReference type="PANTHER" id="PTHR11946">
    <property type="entry name" value="VALYL-TRNA SYNTHETASES"/>
    <property type="match status" value="1"/>
</dbReference>
<dbReference type="Pfam" id="PF08264">
    <property type="entry name" value="Anticodon_1"/>
    <property type="match status" value="1"/>
</dbReference>
<dbReference type="Pfam" id="PF00133">
    <property type="entry name" value="tRNA-synt_1"/>
    <property type="match status" value="1"/>
</dbReference>
<dbReference type="PRINTS" id="PR00986">
    <property type="entry name" value="TRNASYNTHVAL"/>
</dbReference>
<dbReference type="SUPFAM" id="SSF47323">
    <property type="entry name" value="Anticodon-binding domain of a subclass of class I aminoacyl-tRNA synthetases"/>
    <property type="match status" value="1"/>
</dbReference>
<dbReference type="SUPFAM" id="SSF52374">
    <property type="entry name" value="Nucleotidylyl transferase"/>
    <property type="match status" value="1"/>
</dbReference>
<dbReference type="SUPFAM" id="SSF50677">
    <property type="entry name" value="ValRS/IleRS/LeuRS editing domain"/>
    <property type="match status" value="1"/>
</dbReference>
<dbReference type="PROSITE" id="PS00178">
    <property type="entry name" value="AA_TRNA_LIGASE_I"/>
    <property type="match status" value="1"/>
</dbReference>
<sequence length="883" mass="102513">MTLKMDRKALKEEKKKQKLEKFLNKKTTQSKISKAPKPAKNKSSSGYDPMPVEQKWNNYWLSNNLFEPQERSNKFVMCMPPPNITGSLHIGHSMMIAIQDAICRYMRLINYEVLYLPGTDHAGIATQTVVMKQLEKEKKTYNRESFLEATWKWKENYGSRILDQFKRLGTSADFSRQKFTMDAGMNKAVTEAFCSLYEKGLIYRDNKIVNWCCKLQTTLSDIEIDYLSVGKNTILKIDGRDYEFGVIYVFKYPVKFVKDGYESEGHIEVATTRPETILGDVALCANPKDARYTKYDKIIPRNPITEEELSFVFDEAAEMDLESGVLKITPAHDPIDFEIGKKNNLKNIKIFDNQNKIIIEGNYYKLKRLDARDLVVQTLKNKNLFVEKKPYEQVLPMCSRSSDLLEPVIKEQWWCSCSEMAKKAIDAVKTEQIKIYPEESKDDWYRWFENPRDWCLSRQLWWGHRIPAYKTPDGVWTIARNKEQAIQSYKKNNPLNVHYQESDFVQDEDVLDTWFSSGLWPFATLGWPNKNQDLDKYFPTSLLETGKDILFFWVGRMVMMSLELTGKVPFKKVLLHGIVRDAYGRKMSKSLGNVIDPIHVIDGASIETLLDALKLGNLTKENLINAESAVKKDFINGITVCGADALRFTLLSYMNGINDIKLDIERVKGNRKFCNKIWNAALFVKKIVDEIISSDSLSYQDLLNLDLSNEDDKLLVWLIQERNKVISTTHKAFKEYKFMSAVQSIHQFFLYDFCDVYIEIVKKIKTKKYIQACFMVLIDSIKIFSPYMPFITEEIYSQFFDNSLMYTSYPEIIHNKFSTNFKSTLSKIKAIRADIEKYGKEKVDVILDGCECFDKIDIQFISILIPNINTIKFGEGYEVKKVN</sequence>
<accession>C4V924</accession>
<keyword id="KW-0030">Aminoacyl-tRNA synthetase</keyword>
<keyword id="KW-0067">ATP-binding</keyword>
<keyword id="KW-0963">Cytoplasm</keyword>
<keyword id="KW-0436">Ligase</keyword>
<keyword id="KW-0547">Nucleotide-binding</keyword>
<keyword id="KW-0648">Protein biosynthesis</keyword>
<keyword id="KW-1185">Reference proteome</keyword>
<evidence type="ECO:0000250" key="1"/>
<evidence type="ECO:0000256" key="2">
    <source>
        <dbReference type="SAM" id="MobiDB-lite"/>
    </source>
</evidence>
<evidence type="ECO:0000305" key="3"/>
<comment type="catalytic activity">
    <reaction>
        <text>tRNA(Val) + L-valine + ATP = L-valyl-tRNA(Val) + AMP + diphosphate</text>
        <dbReference type="Rhea" id="RHEA:10704"/>
        <dbReference type="Rhea" id="RHEA-COMP:9672"/>
        <dbReference type="Rhea" id="RHEA-COMP:9708"/>
        <dbReference type="ChEBI" id="CHEBI:30616"/>
        <dbReference type="ChEBI" id="CHEBI:33019"/>
        <dbReference type="ChEBI" id="CHEBI:57762"/>
        <dbReference type="ChEBI" id="CHEBI:78442"/>
        <dbReference type="ChEBI" id="CHEBI:78537"/>
        <dbReference type="ChEBI" id="CHEBI:456215"/>
        <dbReference type="EC" id="6.1.1.9"/>
    </reaction>
</comment>
<comment type="subcellular location">
    <subcellularLocation>
        <location evidence="1">Cytoplasm</location>
    </subcellularLocation>
</comment>
<comment type="similarity">
    <text evidence="3">Belongs to the class-I aminoacyl-tRNA synthetase family.</text>
</comment>
<feature type="chain" id="PRO_0000388387" description="Probable valine--tRNA ligase, cytoplasmic">
    <location>
        <begin position="1"/>
        <end position="883"/>
    </location>
</feature>
<feature type="region of interest" description="Disordered" evidence="2">
    <location>
        <begin position="1"/>
        <end position="49"/>
    </location>
</feature>
<feature type="short sequence motif" description="'HIGH' region" evidence="1">
    <location>
        <begin position="82"/>
        <end position="92"/>
    </location>
</feature>
<feature type="short sequence motif" description="'KMSKS' region" evidence="1">
    <location>
        <begin position="586"/>
        <end position="590"/>
    </location>
</feature>
<feature type="compositionally biased region" description="Basic and acidic residues" evidence="2">
    <location>
        <begin position="1"/>
        <end position="23"/>
    </location>
</feature>
<feature type="compositionally biased region" description="Low complexity" evidence="2">
    <location>
        <begin position="30"/>
        <end position="45"/>
    </location>
</feature>
<feature type="binding site" evidence="1">
    <location>
        <position position="589"/>
    </location>
    <ligand>
        <name>ATP</name>
        <dbReference type="ChEBI" id="CHEBI:30616"/>
    </ligand>
</feature>
<reference key="1">
    <citation type="journal article" date="2009" name="PLoS Pathog.">
        <title>Genomic analyses of the microsporidian Nosema ceranae, an emergent pathogen of honey bees.</title>
        <authorList>
            <person name="Cornman R.S."/>
            <person name="Chen Y.P."/>
            <person name="Schatz M.C."/>
            <person name="Street C."/>
            <person name="Zhao Y."/>
            <person name="Desany B."/>
            <person name="Egholm M."/>
            <person name="Hutchison S."/>
            <person name="Pettis J.S."/>
            <person name="Lipkin W.I."/>
            <person name="Evans J.D."/>
        </authorList>
    </citation>
    <scope>NUCLEOTIDE SEQUENCE [LARGE SCALE GENOMIC DNA]</scope>
    <source>
        <strain>BRL01</strain>
    </source>
</reference>
<name>SYVC_VAIC1</name>
<gene>
    <name type="ORF">NCER_101032</name>
</gene>
<protein>
    <recommendedName>
        <fullName>Probable valine--tRNA ligase, cytoplasmic</fullName>
        <ecNumber>6.1.1.9</ecNumber>
    </recommendedName>
    <alternativeName>
        <fullName>Valyl-tRNA synthetase</fullName>
        <shortName>ValRS</shortName>
    </alternativeName>
</protein>
<organism>
    <name type="scientific">Vairimorpha ceranae (strain BRL01)</name>
    <name type="common">Microsporidian parasite</name>
    <name type="synonym">Nosema ceranae</name>
    <dbReference type="NCBI Taxonomy" id="578460"/>
    <lineage>
        <taxon>Eukaryota</taxon>
        <taxon>Fungi</taxon>
        <taxon>Fungi incertae sedis</taxon>
        <taxon>Microsporidia</taxon>
        <taxon>Nosematidae</taxon>
        <taxon>Vairimorpha</taxon>
    </lineage>
</organism>